<sequence>MNIRPSQIKHKQRIASFITHAVVVVMGVLIVSVLFQSYQISSRLMAQEGQRTSVQTSSLIQSLFDFRLAALRIHQDSTAKNASLINALVSRDSSRLDEFFSSVDELELSNAPDLRFISSHDNILWDDGNASFYGIAQQELNKLIRRVAISGNWHLVQTPSEGKSVHILMRRSSLIEAGTGQVVGYLYVGIVLNDNFALLENIRSGSNSENLVLAVDTTPLVSTLKGNEPYSLDYVVHSAKDAMRDSFIVGQTFLEVESVPTYLCVYSIQTNQNVLTLRDNFYFWMAFALISMIGVSIASRWWLQKRIQREIETLMNYTHKLMDLDTKSEFIGSKIYEFDYFGRTLEQSFRRLANKEKQFEDLFNFALSPTMLWNTSGRLIRMNPSAQIQFLREDAQNHFLFEILERQLLPTITNAAQGNNPSDVTTEVDGRVYRWNLSPIMVEGQIISIITQGQDITTIAEAEKQSQAARREAEESARVRAEFLAKMSHELRTPLNGVLGVSQLLKRTPLNDEQREHVAVLCSSGEHLLAVLNDILDFSRLEQGKFRIQKNEFRLKELVCAIDRIYRPLCNEKGLELVVNSNITTAAIVRSDQIRINQILFNLLNNAIKFTHQGSIRVELQLIEGDPLAQLVIQVVDTGIGIREQDLTVIFEPFMQAESTTTREYGGSGLGLTIVHSLVEMLSGQLHVSSEYGIGTRFEIQLPIELVEKPDAPQQLLPAPDPQPLFDKTLRVLLVEDNHTNAFIAQAFCRKYGLDVSWVTDGLQAIEELKIHDYDLVLMDNQLPYLDGVETTRTIKKVLHLPVVVYACTADGLEETRQAFFHAGAEYVLVKPLKEQTLHKALEHFKHHHGQKNAGLN</sequence>
<organism>
    <name type="scientific">Vibrio cholerae serotype O1 (strain ATCC 39315 / El Tor Inaba N16961)</name>
    <dbReference type="NCBI Taxonomy" id="243277"/>
    <lineage>
        <taxon>Bacteria</taxon>
        <taxon>Pseudomonadati</taxon>
        <taxon>Pseudomonadota</taxon>
        <taxon>Gammaproteobacteria</taxon>
        <taxon>Vibrionales</taxon>
        <taxon>Vibrionaceae</taxon>
        <taxon>Vibrio</taxon>
    </lineage>
</organism>
<gene>
    <name type="primary">luxQ</name>
    <name type="ordered locus">VC_A0736</name>
</gene>
<proteinExistence type="evidence at protein level"/>
<feature type="chain" id="PRO_0000074782" description="Autoinducer 2 sensor kinase/phosphatase LuxQ">
    <location>
        <begin position="1"/>
        <end position="857"/>
    </location>
</feature>
<feature type="transmembrane region" description="Helical" evidence="2">
    <location>
        <begin position="14"/>
        <end position="34"/>
    </location>
</feature>
<feature type="transmembrane region" description="Helical" evidence="2">
    <location>
        <begin position="283"/>
        <end position="303"/>
    </location>
</feature>
<feature type="domain" description="Histidine kinase" evidence="3">
    <location>
        <begin position="486"/>
        <end position="706"/>
    </location>
</feature>
<feature type="domain" description="Response regulatory" evidence="4">
    <location>
        <begin position="731"/>
        <end position="846"/>
    </location>
</feature>
<feature type="modified residue" description="Phosphohistidine; by autocatalysis" evidence="3">
    <location>
        <position position="489"/>
    </location>
</feature>
<feature type="modified residue" description="4-aspartylphosphate" evidence="4">
    <location>
        <position position="780"/>
    </location>
</feature>
<feature type="helix" evidence="7">
    <location>
        <begin position="53"/>
        <end position="78"/>
    </location>
</feature>
<feature type="helix" evidence="7">
    <location>
        <begin position="82"/>
        <end position="89"/>
    </location>
</feature>
<feature type="turn" evidence="7">
    <location>
        <begin position="93"/>
        <end position="95"/>
    </location>
</feature>
<feature type="helix" evidence="7">
    <location>
        <begin position="96"/>
        <end position="105"/>
    </location>
</feature>
<feature type="helix" evidence="7">
    <location>
        <begin position="108"/>
        <end position="110"/>
    </location>
</feature>
<feature type="strand" evidence="7">
    <location>
        <begin position="113"/>
        <end position="119"/>
    </location>
</feature>
<feature type="strand" evidence="7">
    <location>
        <begin position="122"/>
        <end position="126"/>
    </location>
</feature>
<feature type="helix" evidence="7">
    <location>
        <begin position="130"/>
        <end position="133"/>
    </location>
</feature>
<feature type="helix" evidence="7">
    <location>
        <begin position="137"/>
        <end position="146"/>
    </location>
</feature>
<feature type="strand" evidence="7">
    <location>
        <begin position="149"/>
        <end position="152"/>
    </location>
</feature>
<feature type="strand" evidence="7">
    <location>
        <begin position="154"/>
        <end position="158"/>
    </location>
</feature>
<feature type="strand" evidence="7">
    <location>
        <begin position="161"/>
        <end position="163"/>
    </location>
</feature>
<feature type="strand" evidence="7">
    <location>
        <begin position="165"/>
        <end position="174"/>
    </location>
</feature>
<feature type="strand" evidence="7">
    <location>
        <begin position="184"/>
        <end position="191"/>
    </location>
</feature>
<feature type="helix" evidence="7">
    <location>
        <begin position="196"/>
        <end position="205"/>
    </location>
</feature>
<feature type="strand" evidence="7">
    <location>
        <begin position="209"/>
        <end position="215"/>
    </location>
</feature>
<feature type="strand" evidence="7">
    <location>
        <begin position="218"/>
        <end position="222"/>
    </location>
</feature>
<feature type="strand" evidence="7">
    <location>
        <begin position="228"/>
        <end position="230"/>
    </location>
</feature>
<feature type="helix" evidence="7">
    <location>
        <begin position="232"/>
        <end position="236"/>
    </location>
</feature>
<feature type="strand" evidence="7">
    <location>
        <begin position="247"/>
        <end position="256"/>
    </location>
</feature>
<feature type="strand" evidence="7">
    <location>
        <begin position="259"/>
        <end position="270"/>
    </location>
</feature>
<accession>Q9KLK7</accession>
<evidence type="ECO:0000250" key="1"/>
<evidence type="ECO:0000255" key="2"/>
<evidence type="ECO:0000255" key="3">
    <source>
        <dbReference type="PROSITE-ProRule" id="PRU00107"/>
    </source>
</evidence>
<evidence type="ECO:0000255" key="4">
    <source>
        <dbReference type="PROSITE-ProRule" id="PRU00169"/>
    </source>
</evidence>
<evidence type="ECO:0000269" key="5">
    <source>
    </source>
</evidence>
<evidence type="ECO:0000305" key="6"/>
<evidence type="ECO:0007829" key="7">
    <source>
        <dbReference type="PDB" id="3C38"/>
    </source>
</evidence>
<dbReference type="EC" id="2.7.13.3"/>
<dbReference type="EC" id="3.1.3.-"/>
<dbReference type="EMBL" id="AE003853">
    <property type="protein sequence ID" value="AAF96635.1"/>
    <property type="molecule type" value="Genomic_DNA"/>
</dbReference>
<dbReference type="PIR" id="C82424">
    <property type="entry name" value="C82424"/>
</dbReference>
<dbReference type="RefSeq" id="NP_233123.1">
    <property type="nucleotide sequence ID" value="NC_002506.1"/>
</dbReference>
<dbReference type="RefSeq" id="WP_001026306.1">
    <property type="nucleotide sequence ID" value="NZ_LT906615.1"/>
</dbReference>
<dbReference type="PDB" id="3C30">
    <property type="method" value="X-ray"/>
    <property type="resolution" value="2.80 A"/>
    <property type="chains" value="A=36-280"/>
</dbReference>
<dbReference type="PDB" id="3C38">
    <property type="method" value="X-ray"/>
    <property type="resolution" value="2.30 A"/>
    <property type="chains" value="A=36-280"/>
</dbReference>
<dbReference type="PDBsum" id="3C30"/>
<dbReference type="PDBsum" id="3C38"/>
<dbReference type="SMR" id="Q9KLK7"/>
<dbReference type="STRING" id="243277.VC_A0736"/>
<dbReference type="DNASU" id="2611934"/>
<dbReference type="EnsemblBacteria" id="AAF96635">
    <property type="protein sequence ID" value="AAF96635"/>
    <property type="gene ID" value="VC_A0736"/>
</dbReference>
<dbReference type="KEGG" id="vch:VC_A0736"/>
<dbReference type="PATRIC" id="fig|243277.26.peg.3359"/>
<dbReference type="eggNOG" id="COG0784">
    <property type="taxonomic scope" value="Bacteria"/>
</dbReference>
<dbReference type="eggNOG" id="COG5002">
    <property type="taxonomic scope" value="Bacteria"/>
</dbReference>
<dbReference type="HOGENOM" id="CLU_000445_74_0_6"/>
<dbReference type="EvolutionaryTrace" id="Q9KLK7"/>
<dbReference type="PHI-base" id="PHI:10038"/>
<dbReference type="Proteomes" id="UP000000584">
    <property type="component" value="Chromosome 2"/>
</dbReference>
<dbReference type="GO" id="GO:0005886">
    <property type="term" value="C:plasma membrane"/>
    <property type="evidence" value="ECO:0007669"/>
    <property type="project" value="UniProtKB-SubCell"/>
</dbReference>
<dbReference type="GO" id="GO:0005524">
    <property type="term" value="F:ATP binding"/>
    <property type="evidence" value="ECO:0007669"/>
    <property type="project" value="UniProtKB-KW"/>
</dbReference>
<dbReference type="GO" id="GO:0004721">
    <property type="term" value="F:phosphoprotein phosphatase activity"/>
    <property type="evidence" value="ECO:0007669"/>
    <property type="project" value="UniProtKB-KW"/>
</dbReference>
<dbReference type="GO" id="GO:0000155">
    <property type="term" value="F:phosphorelay sensor kinase activity"/>
    <property type="evidence" value="ECO:0000318"/>
    <property type="project" value="GO_Central"/>
</dbReference>
<dbReference type="CDD" id="cd16922">
    <property type="entry name" value="HATPase_EvgS-ArcB-TorS-like"/>
    <property type="match status" value="1"/>
</dbReference>
<dbReference type="CDD" id="cd00082">
    <property type="entry name" value="HisKA"/>
    <property type="match status" value="1"/>
</dbReference>
<dbReference type="CDD" id="cd17546">
    <property type="entry name" value="REC_hyHK_CKI1_RcsC-like"/>
    <property type="match status" value="1"/>
</dbReference>
<dbReference type="FunFam" id="1.10.287.130:FF:000091">
    <property type="entry name" value="Autoinducer 2 sensor kinase/phosphatase LuxQ"/>
    <property type="match status" value="1"/>
</dbReference>
<dbReference type="FunFam" id="3.40.50.2300:FF:000322">
    <property type="entry name" value="Autoinducer 2 sensor kinase/phosphatase luxQ"/>
    <property type="match status" value="1"/>
</dbReference>
<dbReference type="FunFam" id="3.30.450.20:FF:000151">
    <property type="entry name" value="Sensor histidine kinase LuxQ"/>
    <property type="match status" value="1"/>
</dbReference>
<dbReference type="FunFam" id="3.30.565.10:FF:000010">
    <property type="entry name" value="Sensor histidine kinase RcsC"/>
    <property type="match status" value="1"/>
</dbReference>
<dbReference type="Gene3D" id="1.10.287.130">
    <property type="match status" value="1"/>
</dbReference>
<dbReference type="Gene3D" id="3.40.50.2300">
    <property type="match status" value="1"/>
</dbReference>
<dbReference type="Gene3D" id="3.30.565.10">
    <property type="entry name" value="Histidine kinase-like ATPase, C-terminal domain"/>
    <property type="match status" value="1"/>
</dbReference>
<dbReference type="Gene3D" id="2.20.20.100">
    <property type="entry name" value="LuxQ periplasmic domain, C-terminal subdomain"/>
    <property type="match status" value="1"/>
</dbReference>
<dbReference type="Gene3D" id="3.30.450.220">
    <property type="entry name" value="LuxQ periplasmic domain, N-terminal subdomain"/>
    <property type="match status" value="1"/>
</dbReference>
<dbReference type="Gene3D" id="3.30.450.20">
    <property type="entry name" value="PAS domain"/>
    <property type="match status" value="1"/>
</dbReference>
<dbReference type="InterPro" id="IPR053413">
    <property type="entry name" value="AI-2_sensor_kinase/phosphatase"/>
</dbReference>
<dbReference type="InterPro" id="IPR011006">
    <property type="entry name" value="CheY-like_superfamily"/>
</dbReference>
<dbReference type="InterPro" id="IPR036890">
    <property type="entry name" value="HATPase_C_sf"/>
</dbReference>
<dbReference type="InterPro" id="IPR005467">
    <property type="entry name" value="His_kinase_dom"/>
</dbReference>
<dbReference type="InterPro" id="IPR003661">
    <property type="entry name" value="HisK_dim/P_dom"/>
</dbReference>
<dbReference type="InterPro" id="IPR036097">
    <property type="entry name" value="HisK_dim/P_sf"/>
</dbReference>
<dbReference type="InterPro" id="IPR015387">
    <property type="entry name" value="LuxQ-periplasm_dom"/>
</dbReference>
<dbReference type="InterPro" id="IPR043056">
    <property type="entry name" value="LuxQ-periplasm_N"/>
</dbReference>
<dbReference type="InterPro" id="IPR029151">
    <property type="entry name" value="Sensor-like_sf"/>
</dbReference>
<dbReference type="InterPro" id="IPR004358">
    <property type="entry name" value="Sig_transdc_His_kin-like_C"/>
</dbReference>
<dbReference type="InterPro" id="IPR001789">
    <property type="entry name" value="Sig_transdc_resp-reg_receiver"/>
</dbReference>
<dbReference type="NCBIfam" id="NF041947">
    <property type="entry name" value="LuxQ_Vibrio"/>
    <property type="match status" value="1"/>
</dbReference>
<dbReference type="PANTHER" id="PTHR43047:SF78">
    <property type="entry name" value="SENSORY_REGULATORY PROTEIN RPFC"/>
    <property type="match status" value="1"/>
</dbReference>
<dbReference type="PANTHER" id="PTHR43047">
    <property type="entry name" value="TWO-COMPONENT HISTIDINE PROTEIN KINASE"/>
    <property type="match status" value="1"/>
</dbReference>
<dbReference type="Pfam" id="PF02518">
    <property type="entry name" value="HATPase_c"/>
    <property type="match status" value="1"/>
</dbReference>
<dbReference type="Pfam" id="PF00512">
    <property type="entry name" value="HisKA"/>
    <property type="match status" value="1"/>
</dbReference>
<dbReference type="Pfam" id="PF09308">
    <property type="entry name" value="LuxQ-periplasm"/>
    <property type="match status" value="1"/>
</dbReference>
<dbReference type="Pfam" id="PF00072">
    <property type="entry name" value="Response_reg"/>
    <property type="match status" value="1"/>
</dbReference>
<dbReference type="PRINTS" id="PR00344">
    <property type="entry name" value="BCTRLSENSOR"/>
</dbReference>
<dbReference type="SMART" id="SM00387">
    <property type="entry name" value="HATPase_c"/>
    <property type="match status" value="1"/>
</dbReference>
<dbReference type="SMART" id="SM00388">
    <property type="entry name" value="HisKA"/>
    <property type="match status" value="1"/>
</dbReference>
<dbReference type="SMART" id="SM00448">
    <property type="entry name" value="REC"/>
    <property type="match status" value="1"/>
</dbReference>
<dbReference type="SUPFAM" id="SSF55874">
    <property type="entry name" value="ATPase domain of HSP90 chaperone/DNA topoisomerase II/histidine kinase"/>
    <property type="match status" value="1"/>
</dbReference>
<dbReference type="SUPFAM" id="SSF52172">
    <property type="entry name" value="CheY-like"/>
    <property type="match status" value="1"/>
</dbReference>
<dbReference type="SUPFAM" id="SSF47384">
    <property type="entry name" value="Homodimeric domain of signal transducing histidine kinase"/>
    <property type="match status" value="1"/>
</dbReference>
<dbReference type="SUPFAM" id="SSF103190">
    <property type="entry name" value="Sensory domain-like"/>
    <property type="match status" value="1"/>
</dbReference>
<dbReference type="PROSITE" id="PS50109">
    <property type="entry name" value="HIS_KIN"/>
    <property type="match status" value="1"/>
</dbReference>
<dbReference type="PROSITE" id="PS50110">
    <property type="entry name" value="RESPONSE_REGULATORY"/>
    <property type="match status" value="1"/>
</dbReference>
<comment type="function">
    <text evidence="1 5">At low cell density, in absence of AI-2 (autoinducer 2), LuxQ has a kinase activity and autophosphorylates on a histidine residue. The phosphoryl group is then transferred to an aspartate residue in the response regulator domain. The phosphoryl group is transferred to LuxU, and ultimately to LuxO. At high cell density, in the presence of AI-2, the kinase activity is inactivated, and the response regulator domain has a phosphatase activity (By similarity).</text>
</comment>
<comment type="catalytic activity">
    <reaction>
        <text>ATP + protein L-histidine = ADP + protein N-phospho-L-histidine.</text>
        <dbReference type="EC" id="2.7.13.3"/>
    </reaction>
</comment>
<comment type="subunit">
    <text evidence="1">Binds the complex formed by AI-2 and LuxP.</text>
</comment>
<comment type="subcellular location">
    <subcellularLocation>
        <location evidence="6">Cell inner membrane</location>
        <topology evidence="6">Multi-pass membrane protein</topology>
    </subcellularLocation>
</comment>
<keyword id="KW-0002">3D-structure</keyword>
<keyword id="KW-0067">ATP-binding</keyword>
<keyword id="KW-0997">Cell inner membrane</keyword>
<keyword id="KW-1003">Cell membrane</keyword>
<keyword id="KW-0378">Hydrolase</keyword>
<keyword id="KW-0418">Kinase</keyword>
<keyword id="KW-0472">Membrane</keyword>
<keyword id="KW-0547">Nucleotide-binding</keyword>
<keyword id="KW-0597">Phosphoprotein</keyword>
<keyword id="KW-0904">Protein phosphatase</keyword>
<keyword id="KW-1185">Reference proteome</keyword>
<keyword id="KW-0808">Transferase</keyword>
<keyword id="KW-0812">Transmembrane</keyword>
<keyword id="KW-1133">Transmembrane helix</keyword>
<keyword id="KW-0902">Two-component regulatory system</keyword>
<reference key="1">
    <citation type="journal article" date="2000" name="Nature">
        <title>DNA sequence of both chromosomes of the cholera pathogen Vibrio cholerae.</title>
        <authorList>
            <person name="Heidelberg J.F."/>
            <person name="Eisen J.A."/>
            <person name="Nelson W.C."/>
            <person name="Clayton R.A."/>
            <person name="Gwinn M.L."/>
            <person name="Dodson R.J."/>
            <person name="Haft D.H."/>
            <person name="Hickey E.K."/>
            <person name="Peterson J.D."/>
            <person name="Umayam L.A."/>
            <person name="Gill S.R."/>
            <person name="Nelson K.E."/>
            <person name="Read T.D."/>
            <person name="Tettelin H."/>
            <person name="Richardson D.L."/>
            <person name="Ermolaeva M.D."/>
            <person name="Vamathevan J.J."/>
            <person name="Bass S."/>
            <person name="Qin H."/>
            <person name="Dragoi I."/>
            <person name="Sellers P."/>
            <person name="McDonald L.A."/>
            <person name="Utterback T.R."/>
            <person name="Fleischmann R.D."/>
            <person name="Nierman W.C."/>
            <person name="White O."/>
            <person name="Salzberg S.L."/>
            <person name="Smith H.O."/>
            <person name="Colwell R.R."/>
            <person name="Mekalanos J.J."/>
            <person name="Venter J.C."/>
            <person name="Fraser C.M."/>
        </authorList>
    </citation>
    <scope>NUCLEOTIDE SEQUENCE [LARGE SCALE GENOMIC DNA]</scope>
    <source>
        <strain>ATCC 39315 / El Tor Inaba N16961</strain>
    </source>
</reference>
<reference key="2">
    <citation type="journal article" date="2002" name="Cell">
        <title>Parallel quorum sensing systems converge to regulate virulence in Vibrio cholerae.</title>
        <authorList>
            <person name="Miller M.B."/>
            <person name="Skorupski K."/>
            <person name="Lenz D.H."/>
            <person name="Taylor R.K."/>
            <person name="Bassler B.L."/>
        </authorList>
    </citation>
    <scope>FUNCTION</scope>
    <source>
        <strain>El Tor C6706</strain>
    </source>
</reference>
<reference key="3">
    <citation type="journal article" date="1997" name="J. Bacteriol.">
        <title>Cross-species induction of luminescence in the quorum-sensing bacterium Vibrio harveyi.</title>
        <authorList>
            <person name="Bassler B.L."/>
            <person name="Greenberg E.P."/>
            <person name="Stevens A.M."/>
        </authorList>
    </citation>
    <scope>AUTOINDUCER 2 (AI-2) SYNTHESIS IN V.CHOLERAE</scope>
</reference>
<name>LUXQ_VIBCH</name>
<protein>
    <recommendedName>
        <fullName>Autoinducer 2 sensor kinase/phosphatase LuxQ</fullName>
        <ecNumber>2.7.13.3</ecNumber>
        <ecNumber>3.1.3.-</ecNumber>
    </recommendedName>
</protein>